<evidence type="ECO:0000255" key="1">
    <source>
        <dbReference type="HAMAP-Rule" id="MF_01114"/>
    </source>
</evidence>
<sequence length="153" mass="17761">MKPQKSLRARAMDILSRQEVSRIGLKRKLAPHAESEEELENVLNEFAERNWQSDLRYAEAYIRSKSRKHGSLRLKQALAQQGIDEETSRNLLPDRSSEKQAAIDVLRKKFKHPAADLKEKQKQARFLAYRGFDADTVQTALKHAWDENWEDGC</sequence>
<feature type="chain" id="PRO_1000065192" description="Regulatory protein RecX">
    <location>
        <begin position="1"/>
        <end position="153"/>
    </location>
</feature>
<name>RECX_NEIMF</name>
<keyword id="KW-0963">Cytoplasm</keyword>
<proteinExistence type="inferred from homology"/>
<organism>
    <name type="scientific">Neisseria meningitidis serogroup C / serotype 2a (strain ATCC 700532 / DSM 15464 / FAM18)</name>
    <dbReference type="NCBI Taxonomy" id="272831"/>
    <lineage>
        <taxon>Bacteria</taxon>
        <taxon>Pseudomonadati</taxon>
        <taxon>Pseudomonadota</taxon>
        <taxon>Betaproteobacteria</taxon>
        <taxon>Neisseriales</taxon>
        <taxon>Neisseriaceae</taxon>
        <taxon>Neisseria</taxon>
    </lineage>
</organism>
<reference key="1">
    <citation type="journal article" date="2007" name="PLoS Genet.">
        <title>Meningococcal genetic variation mechanisms viewed through comparative analysis of serogroup C strain FAM18.</title>
        <authorList>
            <person name="Bentley S.D."/>
            <person name="Vernikos G.S."/>
            <person name="Snyder L.A.S."/>
            <person name="Churcher C."/>
            <person name="Arrowsmith C."/>
            <person name="Chillingworth T."/>
            <person name="Cronin A."/>
            <person name="Davis P.H."/>
            <person name="Holroyd N.E."/>
            <person name="Jagels K."/>
            <person name="Maddison M."/>
            <person name="Moule S."/>
            <person name="Rabbinowitsch E."/>
            <person name="Sharp S."/>
            <person name="Unwin L."/>
            <person name="Whitehead S."/>
            <person name="Quail M.A."/>
            <person name="Achtman M."/>
            <person name="Barrell B.G."/>
            <person name="Saunders N.J."/>
            <person name="Parkhill J."/>
        </authorList>
    </citation>
    <scope>NUCLEOTIDE SEQUENCE [LARGE SCALE GENOMIC DNA]</scope>
    <source>
        <strain>ATCC 700532 / DSM 15464 / FAM18</strain>
    </source>
</reference>
<protein>
    <recommendedName>
        <fullName evidence="1">Regulatory protein RecX</fullName>
    </recommendedName>
</protein>
<accession>A1KUS7</accession>
<dbReference type="EMBL" id="AM421808">
    <property type="protein sequence ID" value="CAM10626.1"/>
    <property type="molecule type" value="Genomic_DNA"/>
</dbReference>
<dbReference type="RefSeq" id="WP_002212941.1">
    <property type="nucleotide sequence ID" value="NC_008767.1"/>
</dbReference>
<dbReference type="SMR" id="A1KUS7"/>
<dbReference type="KEGG" id="nmc:NMC1415"/>
<dbReference type="HOGENOM" id="CLU_066607_3_1_4"/>
<dbReference type="Proteomes" id="UP000002286">
    <property type="component" value="Chromosome"/>
</dbReference>
<dbReference type="GO" id="GO:0005737">
    <property type="term" value="C:cytoplasm"/>
    <property type="evidence" value="ECO:0007669"/>
    <property type="project" value="UniProtKB-SubCell"/>
</dbReference>
<dbReference type="GO" id="GO:0006282">
    <property type="term" value="P:regulation of DNA repair"/>
    <property type="evidence" value="ECO:0007669"/>
    <property type="project" value="UniProtKB-UniRule"/>
</dbReference>
<dbReference type="Gene3D" id="1.10.10.10">
    <property type="entry name" value="Winged helix-like DNA-binding domain superfamily/Winged helix DNA-binding domain"/>
    <property type="match status" value="3"/>
</dbReference>
<dbReference type="HAMAP" id="MF_01114">
    <property type="entry name" value="RecX"/>
    <property type="match status" value="1"/>
</dbReference>
<dbReference type="InterPro" id="IPR053924">
    <property type="entry name" value="RecX_HTH_2nd"/>
</dbReference>
<dbReference type="InterPro" id="IPR053925">
    <property type="entry name" value="RecX_HTH_3rd"/>
</dbReference>
<dbReference type="InterPro" id="IPR003783">
    <property type="entry name" value="Regulatory_RecX"/>
</dbReference>
<dbReference type="InterPro" id="IPR036388">
    <property type="entry name" value="WH-like_DNA-bd_sf"/>
</dbReference>
<dbReference type="NCBIfam" id="NF001055">
    <property type="entry name" value="PRK00117.2-5"/>
    <property type="match status" value="1"/>
</dbReference>
<dbReference type="PANTHER" id="PTHR33602">
    <property type="entry name" value="REGULATORY PROTEIN RECX FAMILY PROTEIN"/>
    <property type="match status" value="1"/>
</dbReference>
<dbReference type="PANTHER" id="PTHR33602:SF1">
    <property type="entry name" value="REGULATORY PROTEIN RECX FAMILY PROTEIN"/>
    <property type="match status" value="1"/>
</dbReference>
<dbReference type="Pfam" id="PF02631">
    <property type="entry name" value="RecX_HTH2"/>
    <property type="match status" value="1"/>
</dbReference>
<dbReference type="Pfam" id="PF21981">
    <property type="entry name" value="RecX_HTH3"/>
    <property type="match status" value="1"/>
</dbReference>
<gene>
    <name evidence="1" type="primary">recX</name>
    <name type="ordered locus">NMC1415</name>
</gene>
<comment type="function">
    <text evidence="1">Modulates RecA activity.</text>
</comment>
<comment type="subcellular location">
    <subcellularLocation>
        <location evidence="1">Cytoplasm</location>
    </subcellularLocation>
</comment>
<comment type="similarity">
    <text evidence="1">Belongs to the RecX family.</text>
</comment>